<evidence type="ECO:0000255" key="1">
    <source>
        <dbReference type="HAMAP-Rule" id="MF_00503"/>
    </source>
</evidence>
<evidence type="ECO:0000256" key="2">
    <source>
        <dbReference type="SAM" id="MobiDB-lite"/>
    </source>
</evidence>
<evidence type="ECO:0000305" key="3"/>
<organism>
    <name type="scientific">Rhodopseudomonas palustris (strain BisB18)</name>
    <dbReference type="NCBI Taxonomy" id="316056"/>
    <lineage>
        <taxon>Bacteria</taxon>
        <taxon>Pseudomonadati</taxon>
        <taxon>Pseudomonadota</taxon>
        <taxon>Alphaproteobacteria</taxon>
        <taxon>Hyphomicrobiales</taxon>
        <taxon>Nitrobacteraceae</taxon>
        <taxon>Rhodopseudomonas</taxon>
    </lineage>
</organism>
<protein>
    <recommendedName>
        <fullName evidence="1">Large ribosomal subunit protein bL9</fullName>
    </recommendedName>
    <alternativeName>
        <fullName evidence="3">50S ribosomal protein L9</fullName>
    </alternativeName>
</protein>
<proteinExistence type="inferred from homology"/>
<dbReference type="EMBL" id="CP000301">
    <property type="protein sequence ID" value="ABD87847.1"/>
    <property type="molecule type" value="Genomic_DNA"/>
</dbReference>
<dbReference type="SMR" id="Q215T9"/>
<dbReference type="STRING" id="316056.RPC_2293"/>
<dbReference type="KEGG" id="rpc:RPC_2293"/>
<dbReference type="eggNOG" id="COG0359">
    <property type="taxonomic scope" value="Bacteria"/>
</dbReference>
<dbReference type="HOGENOM" id="CLU_078938_1_0_5"/>
<dbReference type="OrthoDB" id="9788336at2"/>
<dbReference type="GO" id="GO:1990904">
    <property type="term" value="C:ribonucleoprotein complex"/>
    <property type="evidence" value="ECO:0007669"/>
    <property type="project" value="UniProtKB-KW"/>
</dbReference>
<dbReference type="GO" id="GO:0005840">
    <property type="term" value="C:ribosome"/>
    <property type="evidence" value="ECO:0007669"/>
    <property type="project" value="UniProtKB-KW"/>
</dbReference>
<dbReference type="GO" id="GO:0019843">
    <property type="term" value="F:rRNA binding"/>
    <property type="evidence" value="ECO:0007669"/>
    <property type="project" value="UniProtKB-UniRule"/>
</dbReference>
<dbReference type="GO" id="GO:0003735">
    <property type="term" value="F:structural constituent of ribosome"/>
    <property type="evidence" value="ECO:0007669"/>
    <property type="project" value="InterPro"/>
</dbReference>
<dbReference type="GO" id="GO:0006412">
    <property type="term" value="P:translation"/>
    <property type="evidence" value="ECO:0007669"/>
    <property type="project" value="UniProtKB-UniRule"/>
</dbReference>
<dbReference type="Gene3D" id="3.10.430.100">
    <property type="entry name" value="Ribosomal protein L9, C-terminal domain"/>
    <property type="match status" value="1"/>
</dbReference>
<dbReference type="Gene3D" id="3.40.5.10">
    <property type="entry name" value="Ribosomal protein L9, N-terminal domain"/>
    <property type="match status" value="1"/>
</dbReference>
<dbReference type="HAMAP" id="MF_00503">
    <property type="entry name" value="Ribosomal_bL9"/>
    <property type="match status" value="1"/>
</dbReference>
<dbReference type="InterPro" id="IPR000244">
    <property type="entry name" value="Ribosomal_bL9"/>
</dbReference>
<dbReference type="InterPro" id="IPR009027">
    <property type="entry name" value="Ribosomal_bL9/RNase_H1_N"/>
</dbReference>
<dbReference type="InterPro" id="IPR020594">
    <property type="entry name" value="Ribosomal_bL9_bac/chp"/>
</dbReference>
<dbReference type="InterPro" id="IPR020069">
    <property type="entry name" value="Ribosomal_bL9_C"/>
</dbReference>
<dbReference type="InterPro" id="IPR036791">
    <property type="entry name" value="Ribosomal_bL9_C_sf"/>
</dbReference>
<dbReference type="InterPro" id="IPR020070">
    <property type="entry name" value="Ribosomal_bL9_N"/>
</dbReference>
<dbReference type="InterPro" id="IPR036935">
    <property type="entry name" value="Ribosomal_bL9_N_sf"/>
</dbReference>
<dbReference type="NCBIfam" id="TIGR00158">
    <property type="entry name" value="L9"/>
    <property type="match status" value="1"/>
</dbReference>
<dbReference type="PANTHER" id="PTHR21368">
    <property type="entry name" value="50S RIBOSOMAL PROTEIN L9"/>
    <property type="match status" value="1"/>
</dbReference>
<dbReference type="Pfam" id="PF03948">
    <property type="entry name" value="Ribosomal_L9_C"/>
    <property type="match status" value="1"/>
</dbReference>
<dbReference type="Pfam" id="PF01281">
    <property type="entry name" value="Ribosomal_L9_N"/>
    <property type="match status" value="1"/>
</dbReference>
<dbReference type="SUPFAM" id="SSF55658">
    <property type="entry name" value="L9 N-domain-like"/>
    <property type="match status" value="1"/>
</dbReference>
<dbReference type="SUPFAM" id="SSF55653">
    <property type="entry name" value="Ribosomal protein L9 C-domain"/>
    <property type="match status" value="1"/>
</dbReference>
<dbReference type="PROSITE" id="PS00651">
    <property type="entry name" value="RIBOSOMAL_L9"/>
    <property type="match status" value="1"/>
</dbReference>
<gene>
    <name evidence="1" type="primary">rplI</name>
    <name type="ordered locus">RPC_2293</name>
</gene>
<comment type="function">
    <text evidence="1">Binds to the 23S rRNA.</text>
</comment>
<comment type="similarity">
    <text evidence="1">Belongs to the bacterial ribosomal protein bL9 family.</text>
</comment>
<accession>Q215T9</accession>
<reference key="1">
    <citation type="submission" date="2006-03" db="EMBL/GenBank/DDBJ databases">
        <title>Complete sequence of Rhodopseudomonas palustris BisB18.</title>
        <authorList>
            <consortium name="US DOE Joint Genome Institute"/>
            <person name="Copeland A."/>
            <person name="Lucas S."/>
            <person name="Lapidus A."/>
            <person name="Barry K."/>
            <person name="Detter J.C."/>
            <person name="Glavina del Rio T."/>
            <person name="Hammon N."/>
            <person name="Israni S."/>
            <person name="Dalin E."/>
            <person name="Tice H."/>
            <person name="Pitluck S."/>
            <person name="Chain P."/>
            <person name="Malfatti S."/>
            <person name="Shin M."/>
            <person name="Vergez L."/>
            <person name="Schmutz J."/>
            <person name="Larimer F."/>
            <person name="Land M."/>
            <person name="Hauser L."/>
            <person name="Pelletier D.A."/>
            <person name="Kyrpides N."/>
            <person name="Anderson I."/>
            <person name="Oda Y."/>
            <person name="Harwood C.S."/>
            <person name="Richardson P."/>
        </authorList>
    </citation>
    <scope>NUCLEOTIDE SEQUENCE [LARGE SCALE GENOMIC DNA]</scope>
    <source>
        <strain>BisB18</strain>
    </source>
</reference>
<name>RL9_RHOPB</name>
<keyword id="KW-0687">Ribonucleoprotein</keyword>
<keyword id="KW-0689">Ribosomal protein</keyword>
<keyword id="KW-0694">RNA-binding</keyword>
<keyword id="KW-0699">rRNA-binding</keyword>
<sequence>MEVILLERVAKLGQMGEVVKVKHGFARNFLLPRGKALRATTDNRAKYEHMKADLEARNIEAKAEAIKVAEKIDGRNVVVLRQASETGQLFGSVTVRDIISQFTADGVHIERSQVLLDHPVKTIGKHSISIAVHPEVEVSVSVTVARSALEAERINRGEDISTRQEDQDAAAEALAAAGEFFDPEAHNDGEQEEEAGDK</sequence>
<feature type="chain" id="PRO_0000258483" description="Large ribosomal subunit protein bL9">
    <location>
        <begin position="1"/>
        <end position="198"/>
    </location>
</feature>
<feature type="region of interest" description="Disordered" evidence="2">
    <location>
        <begin position="156"/>
        <end position="198"/>
    </location>
</feature>
<feature type="compositionally biased region" description="Basic and acidic residues" evidence="2">
    <location>
        <begin position="156"/>
        <end position="166"/>
    </location>
</feature>